<reference key="1">
    <citation type="journal article" date="2002" name="Int. J. Cancer">
        <title>The XAGE family of cancer/testis-associated genes: alignment and expression profile in normal tissues, melanoma lesions and Ewing's sarcoma.</title>
        <authorList>
            <person name="Zendman A.J.W."/>
            <person name="van Kraats A.A."/>
            <person name="Weidle U.H."/>
            <person name="Ruiter D.J."/>
            <person name="van Muijen G.N.P."/>
        </authorList>
    </citation>
    <scope>NUCLEOTIDE SEQUENCE [GENOMIC DNA / MRNA]</scope>
</reference>
<reference key="2">
    <citation type="journal article" date="2005" name="Nature">
        <title>The DNA sequence of the human X chromosome.</title>
        <authorList>
            <person name="Ross M.T."/>
            <person name="Grafham D.V."/>
            <person name="Coffey A.J."/>
            <person name="Scherer S."/>
            <person name="McLay K."/>
            <person name="Muzny D."/>
            <person name="Platzer M."/>
            <person name="Howell G.R."/>
            <person name="Burrows C."/>
            <person name="Bird C.P."/>
            <person name="Frankish A."/>
            <person name="Lovell F.L."/>
            <person name="Howe K.L."/>
            <person name="Ashurst J.L."/>
            <person name="Fulton R.S."/>
            <person name="Sudbrak R."/>
            <person name="Wen G."/>
            <person name="Jones M.C."/>
            <person name="Hurles M.E."/>
            <person name="Andrews T.D."/>
            <person name="Scott C.E."/>
            <person name="Searle S."/>
            <person name="Ramser J."/>
            <person name="Whittaker A."/>
            <person name="Deadman R."/>
            <person name="Carter N.P."/>
            <person name="Hunt S.E."/>
            <person name="Chen R."/>
            <person name="Cree A."/>
            <person name="Gunaratne P."/>
            <person name="Havlak P."/>
            <person name="Hodgson A."/>
            <person name="Metzker M.L."/>
            <person name="Richards S."/>
            <person name="Scott G."/>
            <person name="Steffen D."/>
            <person name="Sodergren E."/>
            <person name="Wheeler D.A."/>
            <person name="Worley K.C."/>
            <person name="Ainscough R."/>
            <person name="Ambrose K.D."/>
            <person name="Ansari-Lari M.A."/>
            <person name="Aradhya S."/>
            <person name="Ashwell R.I."/>
            <person name="Babbage A.K."/>
            <person name="Bagguley C.L."/>
            <person name="Ballabio A."/>
            <person name="Banerjee R."/>
            <person name="Barker G.E."/>
            <person name="Barlow K.F."/>
            <person name="Barrett I.P."/>
            <person name="Bates K.N."/>
            <person name="Beare D.M."/>
            <person name="Beasley H."/>
            <person name="Beasley O."/>
            <person name="Beck A."/>
            <person name="Bethel G."/>
            <person name="Blechschmidt K."/>
            <person name="Brady N."/>
            <person name="Bray-Allen S."/>
            <person name="Bridgeman A.M."/>
            <person name="Brown A.J."/>
            <person name="Brown M.J."/>
            <person name="Bonnin D."/>
            <person name="Bruford E.A."/>
            <person name="Buhay C."/>
            <person name="Burch P."/>
            <person name="Burford D."/>
            <person name="Burgess J."/>
            <person name="Burrill W."/>
            <person name="Burton J."/>
            <person name="Bye J.M."/>
            <person name="Carder C."/>
            <person name="Carrel L."/>
            <person name="Chako J."/>
            <person name="Chapman J.C."/>
            <person name="Chavez D."/>
            <person name="Chen E."/>
            <person name="Chen G."/>
            <person name="Chen Y."/>
            <person name="Chen Z."/>
            <person name="Chinault C."/>
            <person name="Ciccodicola A."/>
            <person name="Clark S.Y."/>
            <person name="Clarke G."/>
            <person name="Clee C.M."/>
            <person name="Clegg S."/>
            <person name="Clerc-Blankenburg K."/>
            <person name="Clifford K."/>
            <person name="Cobley V."/>
            <person name="Cole C.G."/>
            <person name="Conquer J.S."/>
            <person name="Corby N."/>
            <person name="Connor R.E."/>
            <person name="David R."/>
            <person name="Davies J."/>
            <person name="Davis C."/>
            <person name="Davis J."/>
            <person name="Delgado O."/>
            <person name="Deshazo D."/>
            <person name="Dhami P."/>
            <person name="Ding Y."/>
            <person name="Dinh H."/>
            <person name="Dodsworth S."/>
            <person name="Draper H."/>
            <person name="Dugan-Rocha S."/>
            <person name="Dunham A."/>
            <person name="Dunn M."/>
            <person name="Durbin K.J."/>
            <person name="Dutta I."/>
            <person name="Eades T."/>
            <person name="Ellwood M."/>
            <person name="Emery-Cohen A."/>
            <person name="Errington H."/>
            <person name="Evans K.L."/>
            <person name="Faulkner L."/>
            <person name="Francis F."/>
            <person name="Frankland J."/>
            <person name="Fraser A.E."/>
            <person name="Galgoczy P."/>
            <person name="Gilbert J."/>
            <person name="Gill R."/>
            <person name="Gloeckner G."/>
            <person name="Gregory S.G."/>
            <person name="Gribble S."/>
            <person name="Griffiths C."/>
            <person name="Grocock R."/>
            <person name="Gu Y."/>
            <person name="Gwilliam R."/>
            <person name="Hamilton C."/>
            <person name="Hart E.A."/>
            <person name="Hawes A."/>
            <person name="Heath P.D."/>
            <person name="Heitmann K."/>
            <person name="Hennig S."/>
            <person name="Hernandez J."/>
            <person name="Hinzmann B."/>
            <person name="Ho S."/>
            <person name="Hoffs M."/>
            <person name="Howden P.J."/>
            <person name="Huckle E.J."/>
            <person name="Hume J."/>
            <person name="Hunt P.J."/>
            <person name="Hunt A.R."/>
            <person name="Isherwood J."/>
            <person name="Jacob L."/>
            <person name="Johnson D."/>
            <person name="Jones S."/>
            <person name="de Jong P.J."/>
            <person name="Joseph S.S."/>
            <person name="Keenan S."/>
            <person name="Kelly S."/>
            <person name="Kershaw J.K."/>
            <person name="Khan Z."/>
            <person name="Kioschis P."/>
            <person name="Klages S."/>
            <person name="Knights A.J."/>
            <person name="Kosiura A."/>
            <person name="Kovar-Smith C."/>
            <person name="Laird G.K."/>
            <person name="Langford C."/>
            <person name="Lawlor S."/>
            <person name="Leversha M."/>
            <person name="Lewis L."/>
            <person name="Liu W."/>
            <person name="Lloyd C."/>
            <person name="Lloyd D.M."/>
            <person name="Loulseged H."/>
            <person name="Loveland J.E."/>
            <person name="Lovell J.D."/>
            <person name="Lozado R."/>
            <person name="Lu J."/>
            <person name="Lyne R."/>
            <person name="Ma J."/>
            <person name="Maheshwari M."/>
            <person name="Matthews L.H."/>
            <person name="McDowall J."/>
            <person name="McLaren S."/>
            <person name="McMurray A."/>
            <person name="Meidl P."/>
            <person name="Meitinger T."/>
            <person name="Milne S."/>
            <person name="Miner G."/>
            <person name="Mistry S.L."/>
            <person name="Morgan M."/>
            <person name="Morris S."/>
            <person name="Mueller I."/>
            <person name="Mullikin J.C."/>
            <person name="Nguyen N."/>
            <person name="Nordsiek G."/>
            <person name="Nyakatura G."/>
            <person name="O'dell C.N."/>
            <person name="Okwuonu G."/>
            <person name="Palmer S."/>
            <person name="Pandian R."/>
            <person name="Parker D."/>
            <person name="Parrish J."/>
            <person name="Pasternak S."/>
            <person name="Patel D."/>
            <person name="Pearce A.V."/>
            <person name="Pearson D.M."/>
            <person name="Pelan S.E."/>
            <person name="Perez L."/>
            <person name="Porter K.M."/>
            <person name="Ramsey Y."/>
            <person name="Reichwald K."/>
            <person name="Rhodes S."/>
            <person name="Ridler K.A."/>
            <person name="Schlessinger D."/>
            <person name="Schueler M.G."/>
            <person name="Sehra H.K."/>
            <person name="Shaw-Smith C."/>
            <person name="Shen H."/>
            <person name="Sheridan E.M."/>
            <person name="Shownkeen R."/>
            <person name="Skuce C.D."/>
            <person name="Smith M.L."/>
            <person name="Sotheran E.C."/>
            <person name="Steingruber H.E."/>
            <person name="Steward C.A."/>
            <person name="Storey R."/>
            <person name="Swann R.M."/>
            <person name="Swarbreck D."/>
            <person name="Tabor P.E."/>
            <person name="Taudien S."/>
            <person name="Taylor T."/>
            <person name="Teague B."/>
            <person name="Thomas K."/>
            <person name="Thorpe A."/>
            <person name="Timms K."/>
            <person name="Tracey A."/>
            <person name="Trevanion S."/>
            <person name="Tromans A.C."/>
            <person name="d'Urso M."/>
            <person name="Verduzco D."/>
            <person name="Villasana D."/>
            <person name="Waldron L."/>
            <person name="Wall M."/>
            <person name="Wang Q."/>
            <person name="Warren J."/>
            <person name="Warry G.L."/>
            <person name="Wei X."/>
            <person name="West A."/>
            <person name="Whitehead S.L."/>
            <person name="Whiteley M.N."/>
            <person name="Wilkinson J.E."/>
            <person name="Willey D.L."/>
            <person name="Williams G."/>
            <person name="Williams L."/>
            <person name="Williamson A."/>
            <person name="Williamson H."/>
            <person name="Wilming L."/>
            <person name="Woodmansey R.L."/>
            <person name="Wray P.W."/>
            <person name="Yen J."/>
            <person name="Zhang J."/>
            <person name="Zhou J."/>
            <person name="Zoghbi H."/>
            <person name="Zorilla S."/>
            <person name="Buck D."/>
            <person name="Reinhardt R."/>
            <person name="Poustka A."/>
            <person name="Rosenthal A."/>
            <person name="Lehrach H."/>
            <person name="Meindl A."/>
            <person name="Minx P.J."/>
            <person name="Hillier L.W."/>
            <person name="Willard H.F."/>
            <person name="Wilson R.K."/>
            <person name="Waterston R.H."/>
            <person name="Rice C.M."/>
            <person name="Vaudin M."/>
            <person name="Coulson A."/>
            <person name="Nelson D.L."/>
            <person name="Weinstock G."/>
            <person name="Sulston J.E."/>
            <person name="Durbin R.M."/>
            <person name="Hubbard T."/>
            <person name="Gibbs R.A."/>
            <person name="Beck S."/>
            <person name="Rogers J."/>
            <person name="Bentley D.R."/>
        </authorList>
    </citation>
    <scope>NUCLEOTIDE SEQUENCE [LARGE SCALE GENOMIC DNA]</scope>
</reference>
<reference key="3">
    <citation type="journal article" date="2004" name="Genome Res.">
        <title>The status, quality, and expansion of the NIH full-length cDNA project: the Mammalian Gene Collection (MGC).</title>
        <authorList>
            <consortium name="The MGC Project Team"/>
        </authorList>
    </citation>
    <scope>NUCLEOTIDE SEQUENCE [LARGE SCALE MRNA]</scope>
    <source>
        <tissue>Placenta</tissue>
    </source>
</reference>
<reference key="4">
    <citation type="journal article" date="1999" name="Cancer Res.">
        <title>Novel genes in the PAGE and GAGE family of tumor antigens found by homology walking in the dbEST database.</title>
        <authorList>
            <person name="Brinkmann U."/>
            <person name="Vasmatzis G."/>
            <person name="Lee B."/>
            <person name="Pastan I."/>
        </authorList>
    </citation>
    <scope>IDENTIFICATION</scope>
</reference>
<gene>
    <name type="primary">XAGE2</name>
    <name type="synonym">GAGED3</name>
    <name type="synonym">XAGE2B</name>
</gene>
<feature type="chain" id="PRO_0000148350" description="X antigen family member 2">
    <location>
        <begin position="1"/>
        <end position="111"/>
    </location>
</feature>
<feature type="region of interest" description="Disordered" evidence="1">
    <location>
        <begin position="1"/>
        <end position="61"/>
    </location>
</feature>
<feature type="region of interest" description="Disordered" evidence="1">
    <location>
        <begin position="77"/>
        <end position="111"/>
    </location>
</feature>
<feature type="compositionally biased region" description="Basic and acidic residues" evidence="1">
    <location>
        <begin position="86"/>
        <end position="111"/>
    </location>
</feature>
<keyword id="KW-1267">Proteomics identification</keyword>
<keyword id="KW-1185">Reference proteome</keyword>
<protein>
    <recommendedName>
        <fullName>X antigen family member 2</fullName>
        <shortName>XAGE-2</shortName>
    </recommendedName>
    <alternativeName>
        <fullName>Cancer/testis antigen 12.2</fullName>
        <shortName>CT12.2</shortName>
    </alternativeName>
    <alternativeName>
        <fullName>G antigen family D member 3</fullName>
    </alternativeName>
</protein>
<evidence type="ECO:0000256" key="1">
    <source>
        <dbReference type="SAM" id="MobiDB-lite"/>
    </source>
</evidence>
<evidence type="ECO:0000305" key="2"/>
<dbReference type="EMBL" id="AJ318891">
    <property type="protein sequence ID" value="CAC88125.1"/>
    <property type="molecule type" value="Genomic_DNA"/>
</dbReference>
<dbReference type="EMBL" id="AJ318892">
    <property type="protein sequence ID" value="CAC88125.1"/>
    <property type="status" value="JOINED"/>
    <property type="molecule type" value="Genomic_DNA"/>
</dbReference>
<dbReference type="EMBL" id="AJ318880">
    <property type="protein sequence ID" value="CAC83007.1"/>
    <property type="molecule type" value="mRNA"/>
</dbReference>
<dbReference type="EMBL" id="BX293536">
    <property type="status" value="NOT_ANNOTATED_CDS"/>
    <property type="molecule type" value="Genomic_DNA"/>
</dbReference>
<dbReference type="EMBL" id="AL953874">
    <property type="protein sequence ID" value="CAI41681.1"/>
    <property type="molecule type" value="Genomic_DNA"/>
</dbReference>
<dbReference type="EMBL" id="BC009232">
    <property type="protein sequence ID" value="AAH09232.1"/>
    <property type="molecule type" value="mRNA"/>
</dbReference>
<dbReference type="EMBL" id="BC066311">
    <property type="protein sequence ID" value="AAH66311.1"/>
    <property type="molecule type" value="mRNA"/>
</dbReference>
<dbReference type="CCDS" id="CCDS59525.1"/>
<dbReference type="RefSeq" id="NP_570133.1">
    <property type="nucleotide sequence ID" value="NM_130777.3"/>
</dbReference>
<dbReference type="RefSeq" id="XP_011529138.1">
    <property type="nucleotide sequence ID" value="XM_011530836.3"/>
</dbReference>
<dbReference type="RefSeq" id="XP_054184156.1">
    <property type="nucleotide sequence ID" value="XM_054328181.1"/>
</dbReference>
<dbReference type="BioGRID" id="114881">
    <property type="interactions" value="14"/>
</dbReference>
<dbReference type="IntAct" id="Q96GT9">
    <property type="interactions" value="14"/>
</dbReference>
<dbReference type="STRING" id="9606.ENSP00000286049"/>
<dbReference type="iPTMnet" id="Q96GT9"/>
<dbReference type="PhosphoSitePlus" id="Q96GT9"/>
<dbReference type="BioMuta" id="XAGE2"/>
<dbReference type="DMDM" id="21759127"/>
<dbReference type="jPOST" id="Q96GT9"/>
<dbReference type="MassIVE" id="Q96GT9"/>
<dbReference type="PaxDb" id="9606-ENSP00000286049"/>
<dbReference type="PeptideAtlas" id="Q96GT9"/>
<dbReference type="ProteomicsDB" id="76665"/>
<dbReference type="Antibodypedia" id="79627">
    <property type="antibodies" value="89 antibodies from 16 providers"/>
</dbReference>
<dbReference type="DNASU" id="9502"/>
<dbReference type="Ensembl" id="ENST00000286049.3">
    <property type="protein sequence ID" value="ENSP00000286049.2"/>
    <property type="gene ID" value="ENSG00000155622.7"/>
</dbReference>
<dbReference type="GeneID" id="9502"/>
<dbReference type="KEGG" id="hsa:9502"/>
<dbReference type="MANE-Select" id="ENST00000286049.3">
    <property type="protein sequence ID" value="ENSP00000286049.2"/>
    <property type="RefSeq nucleotide sequence ID" value="NM_130777.3"/>
    <property type="RefSeq protein sequence ID" value="NP_570133.1"/>
</dbReference>
<dbReference type="UCSC" id="uc004dqe.4">
    <property type="organism name" value="human"/>
</dbReference>
<dbReference type="AGR" id="HGNC:4112"/>
<dbReference type="CTD" id="9502"/>
<dbReference type="GeneCards" id="XAGE2"/>
<dbReference type="HGNC" id="HGNC:4112">
    <property type="gene designation" value="XAGE2"/>
</dbReference>
<dbReference type="HPA" id="ENSG00000155622">
    <property type="expression patterns" value="Tissue enriched (placenta)"/>
</dbReference>
<dbReference type="MIM" id="300416">
    <property type="type" value="gene"/>
</dbReference>
<dbReference type="neXtProt" id="NX_Q96GT9"/>
<dbReference type="OpenTargets" id="ENSG00000155622"/>
<dbReference type="PharmGKB" id="PA28527"/>
<dbReference type="VEuPathDB" id="HostDB:ENSG00000155622"/>
<dbReference type="eggNOG" id="ENOG502TF3A">
    <property type="taxonomic scope" value="Eukaryota"/>
</dbReference>
<dbReference type="GeneTree" id="ENSGT00940000153097"/>
<dbReference type="HOGENOM" id="CLU_150116_2_1_1"/>
<dbReference type="InParanoid" id="Q96GT9"/>
<dbReference type="OMA" id="DECGDGH"/>
<dbReference type="OrthoDB" id="9537262at2759"/>
<dbReference type="PAN-GO" id="Q96GT9">
    <property type="GO annotations" value="0 GO annotations based on evolutionary models"/>
</dbReference>
<dbReference type="PhylomeDB" id="Q96GT9"/>
<dbReference type="TreeFam" id="TF340669"/>
<dbReference type="PathwayCommons" id="Q96GT9"/>
<dbReference type="SignaLink" id="Q96GT9"/>
<dbReference type="BioGRID-ORCS" id="9502">
    <property type="hits" value="9 hits in 669 CRISPR screens"/>
</dbReference>
<dbReference type="GenomeRNAi" id="9502"/>
<dbReference type="Pharos" id="Q96GT9">
    <property type="development level" value="Tbio"/>
</dbReference>
<dbReference type="PRO" id="PR:Q96GT9"/>
<dbReference type="Proteomes" id="UP000005640">
    <property type="component" value="Chromosome X"/>
</dbReference>
<dbReference type="RNAct" id="Q96GT9">
    <property type="molecule type" value="protein"/>
</dbReference>
<dbReference type="Bgee" id="ENSG00000155622">
    <property type="expression patterns" value="Expressed in placenta and 50 other cell types or tissues"/>
</dbReference>
<dbReference type="ExpressionAtlas" id="Q96GT9">
    <property type="expression patterns" value="baseline and differential"/>
</dbReference>
<dbReference type="InterPro" id="IPR031320">
    <property type="entry name" value="GAGE"/>
</dbReference>
<dbReference type="InterPro" id="IPR008625">
    <property type="entry name" value="GAGE_fam"/>
</dbReference>
<dbReference type="PANTHER" id="PTHR14047">
    <property type="entry name" value="P ANTIGEN FAMILY MEMBER 5-RELATED"/>
    <property type="match status" value="1"/>
</dbReference>
<dbReference type="PANTHER" id="PTHR14047:SF35">
    <property type="entry name" value="X ANTIGEN FAMILY MEMBER 2"/>
    <property type="match status" value="1"/>
</dbReference>
<dbReference type="Pfam" id="PF05831">
    <property type="entry name" value="GAGE"/>
    <property type="match status" value="1"/>
</dbReference>
<dbReference type="SMART" id="SM01379">
    <property type="entry name" value="GAGE"/>
    <property type="match status" value="1"/>
</dbReference>
<comment type="interaction">
    <interactant intactId="EBI-750167">
        <id>Q96GT9</id>
    </interactant>
    <interactant intactId="EBI-744366">
        <id>Q96KQ7</id>
        <label>EHMT2</label>
    </interactant>
    <organismsDiffer>false</organismsDiffer>
    <experiments>3</experiments>
</comment>
<comment type="interaction">
    <interactant intactId="EBI-750167">
        <id>Q96GT9</id>
    </interactant>
    <interactant intactId="EBI-10172181">
        <id>Q53SE7</id>
        <label>FLJ13057</label>
    </interactant>
    <organismsDiffer>false</organismsDiffer>
    <experiments>3</experiments>
</comment>
<comment type="interaction">
    <interactant intactId="EBI-750167">
        <id>Q96GT9</id>
    </interactant>
    <interactant intactId="EBI-2548508">
        <id>Q96IK5</id>
        <label>GMCL1</label>
    </interactant>
    <organismsDiffer>false</organismsDiffer>
    <experiments>7</experiments>
</comment>
<comment type="interaction">
    <interactant intactId="EBI-750167">
        <id>Q96GT9</id>
    </interactant>
    <interactant intactId="EBI-745707">
        <id>Q8NEA9</id>
        <label>GMCL2</label>
    </interactant>
    <organismsDiffer>false</organismsDiffer>
    <experiments>3</experiments>
</comment>
<comment type="interaction">
    <interactant intactId="EBI-750167">
        <id>Q96GT9</id>
    </interactant>
    <interactant intactId="EBI-750109">
        <id>Q9NYB0</id>
        <label>TERF2IP</label>
    </interactant>
    <organismsDiffer>false</organismsDiffer>
    <experiments>2</experiments>
</comment>
<comment type="similarity">
    <text evidence="2">Belongs to the GAGE family.</text>
</comment>
<organism>
    <name type="scientific">Homo sapiens</name>
    <name type="common">Human</name>
    <dbReference type="NCBI Taxonomy" id="9606"/>
    <lineage>
        <taxon>Eukaryota</taxon>
        <taxon>Metazoa</taxon>
        <taxon>Chordata</taxon>
        <taxon>Craniata</taxon>
        <taxon>Vertebrata</taxon>
        <taxon>Euteleostomi</taxon>
        <taxon>Mammalia</taxon>
        <taxon>Eutheria</taxon>
        <taxon>Euarchontoglires</taxon>
        <taxon>Primates</taxon>
        <taxon>Haplorrhini</taxon>
        <taxon>Catarrhini</taxon>
        <taxon>Hominidae</taxon>
        <taxon>Homo</taxon>
    </lineage>
</organism>
<name>XAGE2_HUMAN</name>
<sequence>MSWRGRSTYRPRPRRSLQPPELIGAMLEPTDEEPKEEKPPTKSRNPTPDQKREDDQGAAEIQVPDLEADLQELCQTKTGDGCEGGTDVKGKILPKAEHFKMPEAGEGKSQV</sequence>
<proteinExistence type="evidence at protein level"/>
<accession>Q96GT9</accession>
<accession>Q5HYR4</accession>